<accession>Q8DM26</accession>
<organism>
    <name type="scientific">Thermosynechococcus vestitus (strain NIES-2133 / IAM M-273 / BP-1)</name>
    <dbReference type="NCBI Taxonomy" id="197221"/>
    <lineage>
        <taxon>Bacteria</taxon>
        <taxon>Bacillati</taxon>
        <taxon>Cyanobacteriota</taxon>
        <taxon>Cyanophyceae</taxon>
        <taxon>Acaryochloridales</taxon>
        <taxon>Thermosynechococcaceae</taxon>
        <taxon>Thermosynechococcus</taxon>
    </lineage>
</organism>
<dbReference type="EMBL" id="BA000039">
    <property type="protein sequence ID" value="BAC07850.1"/>
    <property type="molecule type" value="Genomic_DNA"/>
</dbReference>
<dbReference type="RefSeq" id="NP_681088.2">
    <property type="nucleotide sequence ID" value="NC_004113.1"/>
</dbReference>
<dbReference type="SMR" id="Q8DM26"/>
<dbReference type="STRING" id="197221.gene:10746880"/>
<dbReference type="EnsemblBacteria" id="BAC07850">
    <property type="protein sequence ID" value="BAC07850"/>
    <property type="gene ID" value="BAC07850"/>
</dbReference>
<dbReference type="KEGG" id="tel:tlr0297"/>
<dbReference type="PATRIC" id="fig|197221.4.peg.311"/>
<dbReference type="eggNOG" id="COG0244">
    <property type="taxonomic scope" value="Bacteria"/>
</dbReference>
<dbReference type="Proteomes" id="UP000000440">
    <property type="component" value="Chromosome"/>
</dbReference>
<dbReference type="GO" id="GO:1990904">
    <property type="term" value="C:ribonucleoprotein complex"/>
    <property type="evidence" value="ECO:0007669"/>
    <property type="project" value="UniProtKB-KW"/>
</dbReference>
<dbReference type="GO" id="GO:0005840">
    <property type="term" value="C:ribosome"/>
    <property type="evidence" value="ECO:0007669"/>
    <property type="project" value="UniProtKB-KW"/>
</dbReference>
<dbReference type="GO" id="GO:0070180">
    <property type="term" value="F:large ribosomal subunit rRNA binding"/>
    <property type="evidence" value="ECO:0007669"/>
    <property type="project" value="UniProtKB-UniRule"/>
</dbReference>
<dbReference type="GO" id="GO:0006412">
    <property type="term" value="P:translation"/>
    <property type="evidence" value="ECO:0007669"/>
    <property type="project" value="UniProtKB-UniRule"/>
</dbReference>
<dbReference type="CDD" id="cd05797">
    <property type="entry name" value="Ribosomal_L10"/>
    <property type="match status" value="1"/>
</dbReference>
<dbReference type="Gene3D" id="3.30.70.1730">
    <property type="match status" value="1"/>
</dbReference>
<dbReference type="Gene3D" id="6.10.250.290">
    <property type="match status" value="1"/>
</dbReference>
<dbReference type="HAMAP" id="MF_00362">
    <property type="entry name" value="Ribosomal_uL10"/>
    <property type="match status" value="1"/>
</dbReference>
<dbReference type="InterPro" id="IPR001790">
    <property type="entry name" value="Ribosomal_uL10"/>
</dbReference>
<dbReference type="InterPro" id="IPR043141">
    <property type="entry name" value="Ribosomal_uL10-like_sf"/>
</dbReference>
<dbReference type="InterPro" id="IPR022973">
    <property type="entry name" value="Ribosomal_uL10_bac"/>
</dbReference>
<dbReference type="InterPro" id="IPR047865">
    <property type="entry name" value="Ribosomal_uL10_bac_type"/>
</dbReference>
<dbReference type="NCBIfam" id="NF000955">
    <property type="entry name" value="PRK00099.1-1"/>
    <property type="match status" value="1"/>
</dbReference>
<dbReference type="PANTHER" id="PTHR11560">
    <property type="entry name" value="39S RIBOSOMAL PROTEIN L10, MITOCHONDRIAL"/>
    <property type="match status" value="1"/>
</dbReference>
<dbReference type="Pfam" id="PF00466">
    <property type="entry name" value="Ribosomal_L10"/>
    <property type="match status" value="1"/>
</dbReference>
<dbReference type="SUPFAM" id="SSF160369">
    <property type="entry name" value="Ribosomal protein L10-like"/>
    <property type="match status" value="1"/>
</dbReference>
<protein>
    <recommendedName>
        <fullName evidence="1">Large ribosomal subunit protein uL10</fullName>
    </recommendedName>
    <alternativeName>
        <fullName evidence="2">50S ribosomal protein L10</fullName>
    </alternativeName>
</protein>
<keyword id="KW-1185">Reference proteome</keyword>
<keyword id="KW-0687">Ribonucleoprotein</keyword>
<keyword id="KW-0689">Ribosomal protein</keyword>
<keyword id="KW-0694">RNA-binding</keyword>
<keyword id="KW-0699">rRNA-binding</keyword>
<reference key="1">
    <citation type="journal article" date="2002" name="DNA Res.">
        <title>Complete genome structure of the thermophilic cyanobacterium Thermosynechococcus elongatus BP-1.</title>
        <authorList>
            <person name="Nakamura Y."/>
            <person name="Kaneko T."/>
            <person name="Sato S."/>
            <person name="Ikeuchi M."/>
            <person name="Katoh H."/>
            <person name="Sasamoto S."/>
            <person name="Watanabe A."/>
            <person name="Iriguchi M."/>
            <person name="Kawashima K."/>
            <person name="Kimura T."/>
            <person name="Kishida Y."/>
            <person name="Kiyokawa C."/>
            <person name="Kohara M."/>
            <person name="Matsumoto M."/>
            <person name="Matsuno A."/>
            <person name="Nakazaki N."/>
            <person name="Shimpo S."/>
            <person name="Sugimoto M."/>
            <person name="Takeuchi C."/>
            <person name="Yamada M."/>
            <person name="Tabata S."/>
        </authorList>
    </citation>
    <scope>NUCLEOTIDE SEQUENCE [LARGE SCALE GENOMIC DNA]</scope>
    <source>
        <strain>NIES-2133 / IAM M-273 / BP-1</strain>
    </source>
</reference>
<proteinExistence type="inferred from homology"/>
<gene>
    <name evidence="1" type="primary">rplJ</name>
    <name evidence="1" type="synonym">rpl10</name>
    <name type="ordered locus">tlr0297</name>
</gene>
<sequence>MMRVGRTLANKKEIVAELKERLRESQMALVIDYQGLSDAEMKDLRQRLRKCNASCKVTKNTLMELAVKESDTWQPITQFLKGPSAFLLLKDDIGGAIKAYQEFQKATKKTTLRGGVMEGRALDEAQVKAIGDLPSKEQLMAQIAGALNAVTAKIAIGIKEVPASLARATQAIADKGAA</sequence>
<feature type="chain" id="PRO_0000154730" description="Large ribosomal subunit protein uL10">
    <location>
        <begin position="1"/>
        <end position="178"/>
    </location>
</feature>
<comment type="function">
    <text evidence="1">Forms part of the ribosomal stalk, playing a central role in the interaction of the ribosome with GTP-bound translation factors.</text>
</comment>
<comment type="subunit">
    <text evidence="1">Part of the ribosomal stalk of the 50S ribosomal subunit. The N-terminus interacts with L11 and the large rRNA to form the base of the stalk. The C-terminus forms an elongated spine to which L12 dimers bind in a sequential fashion forming a multimeric L10(L12)X complex.</text>
</comment>
<comment type="similarity">
    <text evidence="1">Belongs to the universal ribosomal protein uL10 family.</text>
</comment>
<evidence type="ECO:0000255" key="1">
    <source>
        <dbReference type="HAMAP-Rule" id="MF_00362"/>
    </source>
</evidence>
<evidence type="ECO:0000305" key="2"/>
<name>RL10_THEVB</name>